<gene>
    <name evidence="1" type="primary">rsmA</name>
    <name evidence="1" type="synonym">ksgA</name>
    <name type="ordered locus">TSIB_0602</name>
</gene>
<dbReference type="EC" id="2.1.1.-" evidence="1"/>
<dbReference type="EMBL" id="CP001463">
    <property type="protein sequence ID" value="ACS89667.1"/>
    <property type="molecule type" value="Genomic_DNA"/>
</dbReference>
<dbReference type="RefSeq" id="WP_015848887.1">
    <property type="nucleotide sequence ID" value="NC_012883.1"/>
</dbReference>
<dbReference type="SMR" id="C6A222"/>
<dbReference type="STRING" id="604354.TSIB_0602"/>
<dbReference type="GeneID" id="8095590"/>
<dbReference type="KEGG" id="tsi:TSIB_0602"/>
<dbReference type="eggNOG" id="arCOG04131">
    <property type="taxonomic scope" value="Archaea"/>
</dbReference>
<dbReference type="HOGENOM" id="CLU_041220_0_2_2"/>
<dbReference type="OrthoDB" id="9883at2157"/>
<dbReference type="Proteomes" id="UP000009079">
    <property type="component" value="Chromosome"/>
</dbReference>
<dbReference type="GO" id="GO:0005737">
    <property type="term" value="C:cytoplasm"/>
    <property type="evidence" value="ECO:0007669"/>
    <property type="project" value="UniProtKB-SubCell"/>
</dbReference>
<dbReference type="GO" id="GO:0003723">
    <property type="term" value="F:RNA binding"/>
    <property type="evidence" value="ECO:0007669"/>
    <property type="project" value="UniProtKB-KW"/>
</dbReference>
<dbReference type="GO" id="GO:0000179">
    <property type="term" value="F:rRNA (adenine-N6,N6-)-dimethyltransferase activity"/>
    <property type="evidence" value="ECO:0007669"/>
    <property type="project" value="InterPro"/>
</dbReference>
<dbReference type="CDD" id="cd02440">
    <property type="entry name" value="AdoMet_MTases"/>
    <property type="match status" value="1"/>
</dbReference>
<dbReference type="FunFam" id="3.40.50.150:FF:000023">
    <property type="entry name" value="Ribosomal RNA small subunit methyltransferase A"/>
    <property type="match status" value="1"/>
</dbReference>
<dbReference type="Gene3D" id="1.10.8.100">
    <property type="entry name" value="Ribosomal RNA adenine dimethylase-like, domain 2"/>
    <property type="match status" value="1"/>
</dbReference>
<dbReference type="Gene3D" id="3.40.50.150">
    <property type="entry name" value="Vaccinia Virus protein VP39"/>
    <property type="match status" value="1"/>
</dbReference>
<dbReference type="HAMAP" id="MF_00607">
    <property type="entry name" value="16SrRNA_methyltr_A"/>
    <property type="match status" value="1"/>
</dbReference>
<dbReference type="InterPro" id="IPR001737">
    <property type="entry name" value="KsgA/Erm"/>
</dbReference>
<dbReference type="InterPro" id="IPR023165">
    <property type="entry name" value="rRNA_Ade_diMease-like_C"/>
</dbReference>
<dbReference type="InterPro" id="IPR020596">
    <property type="entry name" value="rRNA_Ade_Mease_Trfase_CS"/>
</dbReference>
<dbReference type="InterPro" id="IPR020598">
    <property type="entry name" value="rRNA_Ade_methylase_Trfase_N"/>
</dbReference>
<dbReference type="InterPro" id="IPR011530">
    <property type="entry name" value="rRNA_adenine_dimethylase"/>
</dbReference>
<dbReference type="InterPro" id="IPR029063">
    <property type="entry name" value="SAM-dependent_MTases_sf"/>
</dbReference>
<dbReference type="NCBIfam" id="TIGR00755">
    <property type="entry name" value="ksgA"/>
    <property type="match status" value="1"/>
</dbReference>
<dbReference type="PANTHER" id="PTHR11727">
    <property type="entry name" value="DIMETHYLADENOSINE TRANSFERASE"/>
    <property type="match status" value="1"/>
</dbReference>
<dbReference type="PANTHER" id="PTHR11727:SF7">
    <property type="entry name" value="DIMETHYLADENOSINE TRANSFERASE-RELATED"/>
    <property type="match status" value="1"/>
</dbReference>
<dbReference type="Pfam" id="PF00398">
    <property type="entry name" value="RrnaAD"/>
    <property type="match status" value="1"/>
</dbReference>
<dbReference type="SMART" id="SM00650">
    <property type="entry name" value="rADc"/>
    <property type="match status" value="1"/>
</dbReference>
<dbReference type="SUPFAM" id="SSF53335">
    <property type="entry name" value="S-adenosyl-L-methionine-dependent methyltransferases"/>
    <property type="match status" value="1"/>
</dbReference>
<dbReference type="PROSITE" id="PS01131">
    <property type="entry name" value="RRNA_A_DIMETH"/>
    <property type="match status" value="1"/>
</dbReference>
<dbReference type="PROSITE" id="PS51689">
    <property type="entry name" value="SAM_RNA_A_N6_MT"/>
    <property type="match status" value="1"/>
</dbReference>
<sequence>MYSKVFSLISKYNLKPNSDLGQNFLIVGDVIKREVERAEIKNSETILEIGPGLGVLTDELAKRAGKVYAIEKDSRIIEILKKEYNWSNVEIMQGDALKIKFPEFNKVVSNLPYQISSPITFKLLKYDFERAVLIYQLEFAQRMVAKPGDKNYSRLSVMVQAKVNVDLVERIGRGAFYPKPKVDSAVIVMEPKPKDEQIELNENLVKALFQHRRKLASKALKDSYHMLGLTREDFKKFKPIIERVPHSNKRVFQLSIEDIKDIEEFLRNESLID</sequence>
<protein>
    <recommendedName>
        <fullName evidence="1">Probable ribosomal RNA small subunit methyltransferase A</fullName>
        <ecNumber evidence="1">2.1.1.-</ecNumber>
    </recommendedName>
    <alternativeName>
        <fullName evidence="1">16S rRNA dimethyladenosine transferase</fullName>
    </alternativeName>
    <alternativeName>
        <fullName evidence="1">16S rRNA dimethylase</fullName>
    </alternativeName>
    <alternativeName>
        <fullName evidence="1">S-adenosylmethionine-6-N',N'-adenosyl(rRNA) dimethyltransferase</fullName>
    </alternativeName>
</protein>
<evidence type="ECO:0000255" key="1">
    <source>
        <dbReference type="HAMAP-Rule" id="MF_00607"/>
    </source>
</evidence>
<feature type="chain" id="PRO_1000212256" description="Probable ribosomal RNA small subunit methyltransferase A">
    <location>
        <begin position="1"/>
        <end position="273"/>
    </location>
</feature>
<feature type="binding site" evidence="1">
    <location>
        <position position="23"/>
    </location>
    <ligand>
        <name>S-adenosyl-L-methionine</name>
        <dbReference type="ChEBI" id="CHEBI:59789"/>
    </ligand>
</feature>
<feature type="binding site" evidence="1">
    <location>
        <position position="25"/>
    </location>
    <ligand>
        <name>S-adenosyl-L-methionine</name>
        <dbReference type="ChEBI" id="CHEBI:59789"/>
    </ligand>
</feature>
<feature type="binding site" evidence="1">
    <location>
        <position position="50"/>
    </location>
    <ligand>
        <name>S-adenosyl-L-methionine</name>
        <dbReference type="ChEBI" id="CHEBI:59789"/>
    </ligand>
</feature>
<feature type="binding site" evidence="1">
    <location>
        <position position="71"/>
    </location>
    <ligand>
        <name>S-adenosyl-L-methionine</name>
        <dbReference type="ChEBI" id="CHEBI:59789"/>
    </ligand>
</feature>
<feature type="binding site" evidence="1">
    <location>
        <position position="95"/>
    </location>
    <ligand>
        <name>S-adenosyl-L-methionine</name>
        <dbReference type="ChEBI" id="CHEBI:59789"/>
    </ligand>
</feature>
<feature type="binding site" evidence="1">
    <location>
        <position position="110"/>
    </location>
    <ligand>
        <name>S-adenosyl-L-methionine</name>
        <dbReference type="ChEBI" id="CHEBI:59789"/>
    </ligand>
</feature>
<name>RSMA_THESM</name>
<proteinExistence type="inferred from homology"/>
<reference key="1">
    <citation type="journal article" date="2009" name="Appl. Environ. Microbiol.">
        <title>Metabolic versatility and indigenous origin of the archaeon Thermococcus sibiricus, isolated from a siberian oil reservoir, as revealed by genome analysis.</title>
        <authorList>
            <person name="Mardanov A.V."/>
            <person name="Ravin N.V."/>
            <person name="Svetlitchnyi V.A."/>
            <person name="Beletsky A.V."/>
            <person name="Miroshnichenko M.L."/>
            <person name="Bonch-Osmolovskaya E.A."/>
            <person name="Skryabin K.G."/>
        </authorList>
    </citation>
    <scope>NUCLEOTIDE SEQUENCE [LARGE SCALE GENOMIC DNA]</scope>
    <source>
        <strain>DSM 12597 / MM 739</strain>
    </source>
</reference>
<accession>C6A222</accession>
<organism>
    <name type="scientific">Thermococcus sibiricus (strain DSM 12597 / MM 739)</name>
    <dbReference type="NCBI Taxonomy" id="604354"/>
    <lineage>
        <taxon>Archaea</taxon>
        <taxon>Methanobacteriati</taxon>
        <taxon>Methanobacteriota</taxon>
        <taxon>Thermococci</taxon>
        <taxon>Thermococcales</taxon>
        <taxon>Thermococcaceae</taxon>
        <taxon>Thermococcus</taxon>
    </lineage>
</organism>
<comment type="function">
    <text evidence="1">Specifically dimethylates two adjacent adenosines in the loop of a conserved hairpin near the 3'-end of 16S rRNA in the 30S particle. May play a critical role in biogenesis of 30S subunits.</text>
</comment>
<comment type="subcellular location">
    <subcellularLocation>
        <location evidence="1">Cytoplasm</location>
    </subcellularLocation>
</comment>
<comment type="similarity">
    <text evidence="1">Belongs to the class I-like SAM-binding methyltransferase superfamily. rRNA adenine N(6)-methyltransferase family. RsmA subfamily.</text>
</comment>
<keyword id="KW-0963">Cytoplasm</keyword>
<keyword id="KW-0489">Methyltransferase</keyword>
<keyword id="KW-1185">Reference proteome</keyword>
<keyword id="KW-0694">RNA-binding</keyword>
<keyword id="KW-0698">rRNA processing</keyword>
<keyword id="KW-0949">S-adenosyl-L-methionine</keyword>
<keyword id="KW-0808">Transferase</keyword>